<feature type="signal peptide" evidence="1">
    <location>
        <begin position="1"/>
        <end position="22"/>
    </location>
</feature>
<feature type="propeptide" id="PRO_0000439742" description="Removed in mature form" evidence="5">
    <location>
        <begin position="23"/>
        <end position="43"/>
    </location>
</feature>
<feature type="peptide" id="PRO_0000439743" description="Temporin-CG2" evidence="2">
    <location>
        <begin position="46"/>
        <end position="60"/>
    </location>
</feature>
<organism evidence="3">
    <name type="scientific">Amolops chunganensis</name>
    <name type="common">Chungan torrent frog</name>
    <name type="synonym">Hylorana chunganensis</name>
    <dbReference type="NCBI Taxonomy" id="325556"/>
    <lineage>
        <taxon>Eukaryota</taxon>
        <taxon>Metazoa</taxon>
        <taxon>Chordata</taxon>
        <taxon>Craniata</taxon>
        <taxon>Vertebrata</taxon>
        <taxon>Euteleostomi</taxon>
        <taxon>Amphibia</taxon>
        <taxon>Batrachia</taxon>
        <taxon>Anura</taxon>
        <taxon>Neobatrachia</taxon>
        <taxon>Ranoidea</taxon>
        <taxon>Ranidae</taxon>
        <taxon>Amolops</taxon>
    </lineage>
</organism>
<reference evidence="6" key="1">
    <citation type="journal article" date="2012" name="Peptides">
        <title>Characterization of diverse antimicrobial peptides in skin secretions of Chungan torrent frog Amolops chunganensis.</title>
        <authorList>
            <person name="Yang X."/>
            <person name="Xia J."/>
            <person name="Yu Z."/>
            <person name="Hu Y."/>
            <person name="Li F."/>
            <person name="Meng H."/>
            <person name="Yang S."/>
            <person name="Liu J."/>
            <person name="Wang H."/>
        </authorList>
    </citation>
    <scope>NUCLEOTIDE SEQUENCE [MRNA]</scope>
    <scope>PROTEIN SEQUENCE OF 46-60</scope>
    <scope>FUNCTION</scope>
    <scope>SYNTHESIS</scope>
    <scope>SUBCELLULAR LOCATION</scope>
    <scope>MASS SPECTROMETRY</scope>
    <source>
        <tissue evidence="3">Skin secretion</tissue>
    </source>
</reference>
<protein>
    <recommendedName>
        <fullName evidence="3">Temporin-CG2</fullName>
    </recommendedName>
</protein>
<comment type="function">
    <text evidence="2">Antimicrobial peptide active against a variety of Gram-positive bacterial strains but not against Gram-negative bacteria. Has weak antifungal activity against a slime mold isolate. Has weak hemolytic activity against human erythrocytes.</text>
</comment>
<comment type="subcellular location">
    <subcellularLocation>
        <location evidence="1 2">Secreted</location>
    </subcellularLocation>
</comment>
<comment type="tissue specificity">
    <text evidence="5">Expressed by the skin glands.</text>
</comment>
<comment type="mass spectrometry" mass="1436.8" method="MALDI" evidence="2"/>
<comment type="similarity">
    <text evidence="4">Belongs to the frog skin active peptide (FSAP) family. Temporin subfamily.</text>
</comment>
<name>TP2_AMOCU</name>
<accession>E1AWD8</accession>
<proteinExistence type="evidence at protein level"/>
<dbReference type="EMBL" id="HQ009834">
    <property type="protein sequence ID" value="ADM34210.1"/>
    <property type="molecule type" value="mRNA"/>
</dbReference>
<dbReference type="GO" id="GO:0005576">
    <property type="term" value="C:extracellular region"/>
    <property type="evidence" value="ECO:0007669"/>
    <property type="project" value="UniProtKB-SubCell"/>
</dbReference>
<dbReference type="GO" id="GO:0042742">
    <property type="term" value="P:defense response to bacterium"/>
    <property type="evidence" value="ECO:0007669"/>
    <property type="project" value="UniProtKB-KW"/>
</dbReference>
<dbReference type="GO" id="GO:0050832">
    <property type="term" value="P:defense response to fungus"/>
    <property type="evidence" value="ECO:0007669"/>
    <property type="project" value="UniProtKB-KW"/>
</dbReference>
<dbReference type="GO" id="GO:0031640">
    <property type="term" value="P:killing of cells of another organism"/>
    <property type="evidence" value="ECO:0007669"/>
    <property type="project" value="UniProtKB-KW"/>
</dbReference>
<dbReference type="InterPro" id="IPR004275">
    <property type="entry name" value="Frog_antimicrobial_propeptide"/>
</dbReference>
<dbReference type="Pfam" id="PF03032">
    <property type="entry name" value="FSAP_sig_propep"/>
    <property type="match status" value="1"/>
</dbReference>
<keyword id="KW-0878">Amphibian defense peptide</keyword>
<keyword id="KW-0044">Antibiotic</keyword>
<keyword id="KW-0929">Antimicrobial</keyword>
<keyword id="KW-0165">Cleavage on pair of basic residues</keyword>
<keyword id="KW-0204">Cytolysis</keyword>
<keyword id="KW-0903">Direct protein sequencing</keyword>
<keyword id="KW-0295">Fungicide</keyword>
<keyword id="KW-0354">Hemolysis</keyword>
<keyword id="KW-0964">Secreted</keyword>
<keyword id="KW-0732">Signal</keyword>
<sequence length="60" mass="7044">MFTLKKPLLVLFFLATINLSLCEQERNAEEERRDDDERNVEVEKRFFPIVGKLLSGLFGK</sequence>
<evidence type="ECO:0000255" key="1"/>
<evidence type="ECO:0000269" key="2">
    <source>
    </source>
</evidence>
<evidence type="ECO:0000303" key="3">
    <source>
    </source>
</evidence>
<evidence type="ECO:0000305" key="4"/>
<evidence type="ECO:0000305" key="5">
    <source>
    </source>
</evidence>
<evidence type="ECO:0000312" key="6">
    <source>
        <dbReference type="EMBL" id="ADM34210.1"/>
    </source>
</evidence>